<comment type="function">
    <text>Involved in mRNA degradation. Catalyzes the phosphorolysis of single-stranded polyribonucleotides processively in the 3'- to 5'-direction. Is a global regulator of virulence and persistency.</text>
</comment>
<comment type="catalytic activity">
    <reaction evidence="1">
        <text>RNA(n+1) + phosphate = RNA(n) + a ribonucleoside 5'-diphosphate</text>
        <dbReference type="Rhea" id="RHEA:22096"/>
        <dbReference type="Rhea" id="RHEA-COMP:14527"/>
        <dbReference type="Rhea" id="RHEA-COMP:17342"/>
        <dbReference type="ChEBI" id="CHEBI:43474"/>
        <dbReference type="ChEBI" id="CHEBI:57930"/>
        <dbReference type="ChEBI" id="CHEBI:140395"/>
        <dbReference type="EC" id="2.7.7.8"/>
    </reaction>
</comment>
<comment type="cofactor">
    <cofactor evidence="1">
        <name>Mg(2+)</name>
        <dbReference type="ChEBI" id="CHEBI:18420"/>
    </cofactor>
</comment>
<comment type="subunit">
    <text evidence="1">Component of the RNA degradosome, which is a multiprotein complex involved in RNA processing and mRNA degradation.</text>
</comment>
<comment type="subcellular location">
    <subcellularLocation>
        <location evidence="1">Cytoplasm</location>
    </subcellularLocation>
</comment>
<comment type="similarity">
    <text evidence="1">Belongs to the polyribonucleotide nucleotidyltransferase family.</text>
</comment>
<comment type="sequence caution" evidence="3">
    <conflict type="erroneous initiation">
        <sequence resource="EMBL-CDS" id="AAK81870"/>
    </conflict>
</comment>
<keyword id="KW-0963">Cytoplasm</keyword>
<keyword id="KW-0460">Magnesium</keyword>
<keyword id="KW-0479">Metal-binding</keyword>
<keyword id="KW-0548">Nucleotidyltransferase</keyword>
<keyword id="KW-1185">Reference proteome</keyword>
<keyword id="KW-0694">RNA-binding</keyword>
<keyword id="KW-0808">Transferase</keyword>
<feature type="chain" id="PRO_0000329834" description="Polyribonucleotide nucleotidyltransferase">
    <location>
        <begin position="1"/>
        <end position="711"/>
    </location>
</feature>
<feature type="domain" description="KH" evidence="1">
    <location>
        <begin position="553"/>
        <end position="612"/>
    </location>
</feature>
<feature type="domain" description="S1 motif" evidence="1">
    <location>
        <begin position="622"/>
        <end position="690"/>
    </location>
</feature>
<feature type="region of interest" description="Disordered" evidence="2">
    <location>
        <begin position="690"/>
        <end position="711"/>
    </location>
</feature>
<feature type="compositionally biased region" description="Low complexity" evidence="2">
    <location>
        <begin position="694"/>
        <end position="711"/>
    </location>
</feature>
<feature type="binding site" evidence="1">
    <location>
        <position position="486"/>
    </location>
    <ligand>
        <name>Mg(2+)</name>
        <dbReference type="ChEBI" id="CHEBI:18420"/>
    </ligand>
</feature>
<feature type="binding site" evidence="1">
    <location>
        <position position="492"/>
    </location>
    <ligand>
        <name>Mg(2+)</name>
        <dbReference type="ChEBI" id="CHEBI:18420"/>
    </ligand>
</feature>
<sequence>MLNPIVRKFQYGQHTVTLETGMMARQATAAVMVSMDDTAVFVTVVGQKKAKPGQDFFPLTVNYQERTYAAGRIPGSFFRREGRPSEGETLIARLIDRPVRPLFPEGFVNEVQVIATVVSVNPQVNPDIVAMIGASAALSLSGIPFNGPIGAARVGYINDQYVLNPTQDELKESKLDLVVAGTEAAVLMVESEAELLSEDTMLGAVVFGHEQQQVVIQAINDLVKEAGKPRWDWQPEAVNDALNARVAALAESRLSDAYRITDKQERYAQVDVIKSETIEQLIAEDETLDANELGEILHAIEKNVVRSRVLAGEPRIDGREKDMIRGLDVRTGVLPRTHGSALFTRGETQALVTATLGTARDAQVLDELMGERTDSFLFHYNFPPYSVGETGMVGSPKRREIGHGRLAKRGVLAVMPDMDKFPYTVRVVSEITESNGSSSMASVCGASLALMDAGVPIKAAVAGIAMGLVKEGDNYVVLSDILGDEDHLGDMDFKVAGSRDGISALQMDIKIEGITKEIMQVALNQAKGARLHILGVMEQAINAPRGDISEFAPRIHTIKISTDKIKDVIGKGGSVIRALTEETGTTIEIEDDGTVKIAATDGEKAKYAIRRIEEITAEIEVGRIYNGKVTRIVDFGAFVAIGGGKEGLVHISQIADKRVEKVTDYLQMGQEVPVKVLEVDRQGRVRLSIKEATEQSQPAAAPEAPASEQAE</sequence>
<gene>
    <name evidence="1" type="primary">pnp</name>
    <name type="ordered locus">STM3282</name>
</gene>
<reference key="1">
    <citation type="journal article" date="2002" name="Proc. Natl. Acad. Sci. U.S.A.">
        <title>Polynucleotide phosphorylase is a global regulator of virulence and persistency in Salmonella enterica.</title>
        <authorList>
            <person name="Clements M.O."/>
            <person name="Eriksson S."/>
            <person name="Thompson A."/>
            <person name="Lucchini S."/>
            <person name="Hinton J.C.D."/>
            <person name="Normark S."/>
            <person name="Rhen M."/>
        </authorList>
    </citation>
    <scope>NUCLEOTIDE SEQUENCE [GENOMIC DNA]</scope>
    <scope>CHARACTERIZATION</scope>
    <source>
        <strain>SR-11</strain>
    </source>
</reference>
<reference key="2">
    <citation type="journal article" date="2001" name="Nature">
        <title>Complete genome sequence of Salmonella enterica serovar Typhimurium LT2.</title>
        <authorList>
            <person name="McClelland M."/>
            <person name="Sanderson K.E."/>
            <person name="Spieth J."/>
            <person name="Clifton S.W."/>
            <person name="Latreille P."/>
            <person name="Courtney L."/>
            <person name="Porwollik S."/>
            <person name="Ali J."/>
            <person name="Dante M."/>
            <person name="Du F."/>
            <person name="Hou S."/>
            <person name="Layman D."/>
            <person name="Leonard S."/>
            <person name="Nguyen C."/>
            <person name="Scott K."/>
            <person name="Holmes A."/>
            <person name="Grewal N."/>
            <person name="Mulvaney E."/>
            <person name="Ryan E."/>
            <person name="Sun H."/>
            <person name="Florea L."/>
            <person name="Miller W."/>
            <person name="Stoneking T."/>
            <person name="Nhan M."/>
            <person name="Waterston R."/>
            <person name="Wilson R.K."/>
        </authorList>
    </citation>
    <scope>NUCLEOTIDE SEQUENCE [LARGE SCALE GENOMIC DNA]</scope>
    <source>
        <strain>LT2 / SGSC1412 / ATCC 700720</strain>
    </source>
</reference>
<protein>
    <recommendedName>
        <fullName evidence="1">Polyribonucleotide nucleotidyltransferase</fullName>
        <ecNumber evidence="1">2.7.7.8</ecNumber>
    </recommendedName>
    <alternativeName>
        <fullName evidence="1">Polynucleotide phosphorylase</fullName>
        <shortName evidence="1">PNPase</shortName>
    </alternativeName>
</protein>
<evidence type="ECO:0000255" key="1">
    <source>
        <dbReference type="HAMAP-Rule" id="MF_01595"/>
    </source>
</evidence>
<evidence type="ECO:0000256" key="2">
    <source>
        <dbReference type="SAM" id="MobiDB-lite"/>
    </source>
</evidence>
<evidence type="ECO:0000305" key="3"/>
<organism>
    <name type="scientific">Salmonella typhimurium (strain LT2 / SGSC1412 / ATCC 700720)</name>
    <dbReference type="NCBI Taxonomy" id="99287"/>
    <lineage>
        <taxon>Bacteria</taxon>
        <taxon>Pseudomonadati</taxon>
        <taxon>Pseudomonadota</taxon>
        <taxon>Gammaproteobacteria</taxon>
        <taxon>Enterobacterales</taxon>
        <taxon>Enterobacteriaceae</taxon>
        <taxon>Salmonella</taxon>
    </lineage>
</organism>
<proteinExistence type="evidence at protein level"/>
<accession>Q8ZLT3</accession>
<accession>Q93MR3</accession>
<dbReference type="EC" id="2.7.7.8" evidence="1"/>
<dbReference type="EMBL" id="AF399929">
    <property type="protein sequence ID" value="AAK81870.1"/>
    <property type="status" value="ALT_INIT"/>
    <property type="molecule type" value="Genomic_DNA"/>
</dbReference>
<dbReference type="EMBL" id="AE006468">
    <property type="protein sequence ID" value="AAL22154.1"/>
    <property type="molecule type" value="Genomic_DNA"/>
</dbReference>
<dbReference type="RefSeq" id="NP_462195.1">
    <property type="nucleotide sequence ID" value="NC_003197.2"/>
</dbReference>
<dbReference type="RefSeq" id="WP_001670767.1">
    <property type="nucleotide sequence ID" value="NC_003197.2"/>
</dbReference>
<dbReference type="SMR" id="Q8ZLT3"/>
<dbReference type="STRING" id="99287.STM3282"/>
<dbReference type="PaxDb" id="99287-STM3282"/>
<dbReference type="GeneID" id="1254805"/>
<dbReference type="KEGG" id="stm:STM3282"/>
<dbReference type="PATRIC" id="fig|99287.12.peg.3481"/>
<dbReference type="HOGENOM" id="CLU_004217_2_2_6"/>
<dbReference type="OMA" id="RFMFHYN"/>
<dbReference type="PhylomeDB" id="Q8ZLT3"/>
<dbReference type="BioCyc" id="SENT99287:STM3282-MONOMER"/>
<dbReference type="PHI-base" id="PHI:3878"/>
<dbReference type="Proteomes" id="UP000001014">
    <property type="component" value="Chromosome"/>
</dbReference>
<dbReference type="GO" id="GO:0005829">
    <property type="term" value="C:cytosol"/>
    <property type="evidence" value="ECO:0000318"/>
    <property type="project" value="GO_Central"/>
</dbReference>
<dbReference type="GO" id="GO:0000175">
    <property type="term" value="F:3'-5'-RNA exonuclease activity"/>
    <property type="evidence" value="ECO:0000318"/>
    <property type="project" value="GO_Central"/>
</dbReference>
<dbReference type="GO" id="GO:0000287">
    <property type="term" value="F:magnesium ion binding"/>
    <property type="evidence" value="ECO:0007669"/>
    <property type="project" value="UniProtKB-UniRule"/>
</dbReference>
<dbReference type="GO" id="GO:0004654">
    <property type="term" value="F:polyribonucleotide nucleotidyltransferase activity"/>
    <property type="evidence" value="ECO:0000318"/>
    <property type="project" value="GO_Central"/>
</dbReference>
<dbReference type="GO" id="GO:0003723">
    <property type="term" value="F:RNA binding"/>
    <property type="evidence" value="ECO:0007669"/>
    <property type="project" value="UniProtKB-UniRule"/>
</dbReference>
<dbReference type="GO" id="GO:0006402">
    <property type="term" value="P:mRNA catabolic process"/>
    <property type="evidence" value="ECO:0007669"/>
    <property type="project" value="UniProtKB-UniRule"/>
</dbReference>
<dbReference type="GO" id="GO:0006401">
    <property type="term" value="P:RNA catabolic process"/>
    <property type="evidence" value="ECO:0000318"/>
    <property type="project" value="GO_Central"/>
</dbReference>
<dbReference type="GO" id="GO:0006396">
    <property type="term" value="P:RNA processing"/>
    <property type="evidence" value="ECO:0007669"/>
    <property type="project" value="InterPro"/>
</dbReference>
<dbReference type="CDD" id="cd02393">
    <property type="entry name" value="KH-I_PNPase"/>
    <property type="match status" value="1"/>
</dbReference>
<dbReference type="CDD" id="cd11363">
    <property type="entry name" value="RNase_PH_PNPase_1"/>
    <property type="match status" value="1"/>
</dbReference>
<dbReference type="CDD" id="cd11364">
    <property type="entry name" value="RNase_PH_PNPase_2"/>
    <property type="match status" value="1"/>
</dbReference>
<dbReference type="CDD" id="cd04472">
    <property type="entry name" value="S1_PNPase"/>
    <property type="match status" value="1"/>
</dbReference>
<dbReference type="FunFam" id="2.40.50.140:FF:000023">
    <property type="entry name" value="Polyribonucleotide nucleotidyltransferase"/>
    <property type="match status" value="1"/>
</dbReference>
<dbReference type="FunFam" id="3.30.1370.10:FF:000001">
    <property type="entry name" value="Polyribonucleotide nucleotidyltransferase"/>
    <property type="match status" value="1"/>
</dbReference>
<dbReference type="FunFam" id="3.30.230.70:FF:000001">
    <property type="entry name" value="Polyribonucleotide nucleotidyltransferase"/>
    <property type="match status" value="1"/>
</dbReference>
<dbReference type="FunFam" id="3.30.230.70:FF:000002">
    <property type="entry name" value="Polyribonucleotide nucleotidyltransferase"/>
    <property type="match status" value="1"/>
</dbReference>
<dbReference type="Gene3D" id="3.30.230.70">
    <property type="entry name" value="GHMP Kinase, N-terminal domain"/>
    <property type="match status" value="2"/>
</dbReference>
<dbReference type="Gene3D" id="3.30.1370.10">
    <property type="entry name" value="K Homology domain, type 1"/>
    <property type="match status" value="1"/>
</dbReference>
<dbReference type="Gene3D" id="2.40.50.140">
    <property type="entry name" value="Nucleic acid-binding proteins"/>
    <property type="match status" value="1"/>
</dbReference>
<dbReference type="HAMAP" id="MF_01595">
    <property type="entry name" value="PNPase"/>
    <property type="match status" value="1"/>
</dbReference>
<dbReference type="InterPro" id="IPR001247">
    <property type="entry name" value="ExoRNase_PH_dom1"/>
</dbReference>
<dbReference type="InterPro" id="IPR015847">
    <property type="entry name" value="ExoRNase_PH_dom2"/>
</dbReference>
<dbReference type="InterPro" id="IPR036345">
    <property type="entry name" value="ExoRNase_PH_dom2_sf"/>
</dbReference>
<dbReference type="InterPro" id="IPR004087">
    <property type="entry name" value="KH_dom"/>
</dbReference>
<dbReference type="InterPro" id="IPR004088">
    <property type="entry name" value="KH_dom_type_1"/>
</dbReference>
<dbReference type="InterPro" id="IPR036612">
    <property type="entry name" value="KH_dom_type_1_sf"/>
</dbReference>
<dbReference type="InterPro" id="IPR012340">
    <property type="entry name" value="NA-bd_OB-fold"/>
</dbReference>
<dbReference type="InterPro" id="IPR012162">
    <property type="entry name" value="PNPase"/>
</dbReference>
<dbReference type="InterPro" id="IPR027408">
    <property type="entry name" value="PNPase/RNase_PH_dom_sf"/>
</dbReference>
<dbReference type="InterPro" id="IPR015848">
    <property type="entry name" value="PNPase_PH_RNA-bd_bac/org-type"/>
</dbReference>
<dbReference type="InterPro" id="IPR036456">
    <property type="entry name" value="PNPase_PH_RNA-bd_sf"/>
</dbReference>
<dbReference type="InterPro" id="IPR020568">
    <property type="entry name" value="Ribosomal_Su5_D2-typ_SF"/>
</dbReference>
<dbReference type="InterPro" id="IPR003029">
    <property type="entry name" value="S1_domain"/>
</dbReference>
<dbReference type="NCBIfam" id="TIGR03591">
    <property type="entry name" value="polynuc_phos"/>
    <property type="match status" value="1"/>
</dbReference>
<dbReference type="NCBIfam" id="NF008805">
    <property type="entry name" value="PRK11824.1"/>
    <property type="match status" value="1"/>
</dbReference>
<dbReference type="PANTHER" id="PTHR11252">
    <property type="entry name" value="POLYRIBONUCLEOTIDE NUCLEOTIDYLTRANSFERASE"/>
    <property type="match status" value="1"/>
</dbReference>
<dbReference type="PANTHER" id="PTHR11252:SF0">
    <property type="entry name" value="POLYRIBONUCLEOTIDE NUCLEOTIDYLTRANSFERASE 1, MITOCHONDRIAL"/>
    <property type="match status" value="1"/>
</dbReference>
<dbReference type="Pfam" id="PF00013">
    <property type="entry name" value="KH_1"/>
    <property type="match status" value="1"/>
</dbReference>
<dbReference type="Pfam" id="PF03726">
    <property type="entry name" value="PNPase"/>
    <property type="match status" value="1"/>
</dbReference>
<dbReference type="Pfam" id="PF01138">
    <property type="entry name" value="RNase_PH"/>
    <property type="match status" value="2"/>
</dbReference>
<dbReference type="Pfam" id="PF03725">
    <property type="entry name" value="RNase_PH_C"/>
    <property type="match status" value="2"/>
</dbReference>
<dbReference type="Pfam" id="PF00575">
    <property type="entry name" value="S1"/>
    <property type="match status" value="1"/>
</dbReference>
<dbReference type="PIRSF" id="PIRSF005499">
    <property type="entry name" value="PNPase"/>
    <property type="match status" value="1"/>
</dbReference>
<dbReference type="SMART" id="SM00322">
    <property type="entry name" value="KH"/>
    <property type="match status" value="1"/>
</dbReference>
<dbReference type="SMART" id="SM00316">
    <property type="entry name" value="S1"/>
    <property type="match status" value="1"/>
</dbReference>
<dbReference type="SUPFAM" id="SSF54791">
    <property type="entry name" value="Eukaryotic type KH-domain (KH-domain type I)"/>
    <property type="match status" value="1"/>
</dbReference>
<dbReference type="SUPFAM" id="SSF50249">
    <property type="entry name" value="Nucleic acid-binding proteins"/>
    <property type="match status" value="1"/>
</dbReference>
<dbReference type="SUPFAM" id="SSF46915">
    <property type="entry name" value="Polynucleotide phosphorylase/guanosine pentaphosphate synthase (PNPase/GPSI), domain 3"/>
    <property type="match status" value="1"/>
</dbReference>
<dbReference type="SUPFAM" id="SSF55666">
    <property type="entry name" value="Ribonuclease PH domain 2-like"/>
    <property type="match status" value="2"/>
</dbReference>
<dbReference type="SUPFAM" id="SSF54211">
    <property type="entry name" value="Ribosomal protein S5 domain 2-like"/>
    <property type="match status" value="2"/>
</dbReference>
<dbReference type="PROSITE" id="PS50084">
    <property type="entry name" value="KH_TYPE_1"/>
    <property type="match status" value="1"/>
</dbReference>
<dbReference type="PROSITE" id="PS50126">
    <property type="entry name" value="S1"/>
    <property type="match status" value="1"/>
</dbReference>
<name>PNP_SALTY</name>